<keyword id="KW-0067">ATP-binding</keyword>
<keyword id="KW-0963">Cytoplasm</keyword>
<keyword id="KW-0418">Kinase</keyword>
<keyword id="KW-0460">Magnesium</keyword>
<keyword id="KW-0479">Metal-binding</keyword>
<keyword id="KW-0546">Nucleotide metabolism</keyword>
<keyword id="KW-0547">Nucleotide-binding</keyword>
<keyword id="KW-0597">Phosphoprotein</keyword>
<keyword id="KW-1185">Reference proteome</keyword>
<keyword id="KW-0808">Transferase</keyword>
<comment type="function">
    <text evidence="1">Major role in the synthesis of nucleoside triphosphates other than ATP. The ATP gamma phosphate is transferred to the NDP beta phosphate via a ping-pong mechanism, using a phosphorylated active-site intermediate.</text>
</comment>
<comment type="catalytic activity">
    <reaction evidence="1">
        <text>a 2'-deoxyribonucleoside 5'-diphosphate + ATP = a 2'-deoxyribonucleoside 5'-triphosphate + ADP</text>
        <dbReference type="Rhea" id="RHEA:44640"/>
        <dbReference type="ChEBI" id="CHEBI:30616"/>
        <dbReference type="ChEBI" id="CHEBI:61560"/>
        <dbReference type="ChEBI" id="CHEBI:73316"/>
        <dbReference type="ChEBI" id="CHEBI:456216"/>
        <dbReference type="EC" id="2.7.4.6"/>
    </reaction>
</comment>
<comment type="catalytic activity">
    <reaction evidence="1">
        <text>a ribonucleoside 5'-diphosphate + ATP = a ribonucleoside 5'-triphosphate + ADP</text>
        <dbReference type="Rhea" id="RHEA:18113"/>
        <dbReference type="ChEBI" id="CHEBI:30616"/>
        <dbReference type="ChEBI" id="CHEBI:57930"/>
        <dbReference type="ChEBI" id="CHEBI:61557"/>
        <dbReference type="ChEBI" id="CHEBI:456216"/>
        <dbReference type="EC" id="2.7.4.6"/>
    </reaction>
</comment>
<comment type="cofactor">
    <cofactor evidence="1">
        <name>Mg(2+)</name>
        <dbReference type="ChEBI" id="CHEBI:18420"/>
    </cofactor>
</comment>
<comment type="subunit">
    <text evidence="1">Homotetramer.</text>
</comment>
<comment type="subcellular location">
    <subcellularLocation>
        <location evidence="1">Cytoplasm</location>
    </subcellularLocation>
</comment>
<comment type="similarity">
    <text evidence="1">Belongs to the NDK family.</text>
</comment>
<proteinExistence type="inferred from homology"/>
<feature type="chain" id="PRO_0000267791" description="Nucleoside diphosphate kinase">
    <location>
        <begin position="1"/>
        <end position="140"/>
    </location>
</feature>
<feature type="active site" description="Pros-phosphohistidine intermediate" evidence="1">
    <location>
        <position position="117"/>
    </location>
</feature>
<feature type="binding site" evidence="1">
    <location>
        <position position="11"/>
    </location>
    <ligand>
        <name>ATP</name>
        <dbReference type="ChEBI" id="CHEBI:30616"/>
    </ligand>
</feature>
<feature type="binding site" evidence="1">
    <location>
        <position position="59"/>
    </location>
    <ligand>
        <name>ATP</name>
        <dbReference type="ChEBI" id="CHEBI:30616"/>
    </ligand>
</feature>
<feature type="binding site" evidence="1">
    <location>
        <position position="87"/>
    </location>
    <ligand>
        <name>ATP</name>
        <dbReference type="ChEBI" id="CHEBI:30616"/>
    </ligand>
</feature>
<feature type="binding site" evidence="1">
    <location>
        <position position="93"/>
    </location>
    <ligand>
        <name>ATP</name>
        <dbReference type="ChEBI" id="CHEBI:30616"/>
    </ligand>
</feature>
<feature type="binding site" evidence="1">
    <location>
        <position position="104"/>
    </location>
    <ligand>
        <name>ATP</name>
        <dbReference type="ChEBI" id="CHEBI:30616"/>
    </ligand>
</feature>
<feature type="binding site" evidence="1">
    <location>
        <position position="114"/>
    </location>
    <ligand>
        <name>ATP</name>
        <dbReference type="ChEBI" id="CHEBI:30616"/>
    </ligand>
</feature>
<dbReference type="EC" id="2.7.4.6" evidence="1"/>
<dbReference type="EMBL" id="CP000319">
    <property type="protein sequence ID" value="ABE62919.1"/>
    <property type="molecule type" value="Genomic_DNA"/>
</dbReference>
<dbReference type="RefSeq" id="WP_011510598.1">
    <property type="nucleotide sequence ID" value="NC_007964.1"/>
</dbReference>
<dbReference type="SMR" id="Q1QLH8"/>
<dbReference type="STRING" id="323097.Nham_2122"/>
<dbReference type="KEGG" id="nha:Nham_2122"/>
<dbReference type="eggNOG" id="COG0105">
    <property type="taxonomic scope" value="Bacteria"/>
</dbReference>
<dbReference type="HOGENOM" id="CLU_060216_8_1_5"/>
<dbReference type="OrthoDB" id="9801161at2"/>
<dbReference type="Proteomes" id="UP000001953">
    <property type="component" value="Chromosome"/>
</dbReference>
<dbReference type="GO" id="GO:0005737">
    <property type="term" value="C:cytoplasm"/>
    <property type="evidence" value="ECO:0007669"/>
    <property type="project" value="UniProtKB-SubCell"/>
</dbReference>
<dbReference type="GO" id="GO:0005524">
    <property type="term" value="F:ATP binding"/>
    <property type="evidence" value="ECO:0007669"/>
    <property type="project" value="UniProtKB-UniRule"/>
</dbReference>
<dbReference type="GO" id="GO:0046872">
    <property type="term" value="F:metal ion binding"/>
    <property type="evidence" value="ECO:0007669"/>
    <property type="project" value="UniProtKB-KW"/>
</dbReference>
<dbReference type="GO" id="GO:0004550">
    <property type="term" value="F:nucleoside diphosphate kinase activity"/>
    <property type="evidence" value="ECO:0007669"/>
    <property type="project" value="UniProtKB-UniRule"/>
</dbReference>
<dbReference type="GO" id="GO:0006241">
    <property type="term" value="P:CTP biosynthetic process"/>
    <property type="evidence" value="ECO:0007669"/>
    <property type="project" value="UniProtKB-UniRule"/>
</dbReference>
<dbReference type="GO" id="GO:0006183">
    <property type="term" value="P:GTP biosynthetic process"/>
    <property type="evidence" value="ECO:0007669"/>
    <property type="project" value="UniProtKB-UniRule"/>
</dbReference>
<dbReference type="GO" id="GO:0006228">
    <property type="term" value="P:UTP biosynthetic process"/>
    <property type="evidence" value="ECO:0007669"/>
    <property type="project" value="UniProtKB-UniRule"/>
</dbReference>
<dbReference type="CDD" id="cd04413">
    <property type="entry name" value="NDPk_I"/>
    <property type="match status" value="1"/>
</dbReference>
<dbReference type="FunFam" id="3.30.70.141:FF:000039">
    <property type="entry name" value="Nucleoside diphosphate kinase B"/>
    <property type="match status" value="1"/>
</dbReference>
<dbReference type="Gene3D" id="3.30.70.141">
    <property type="entry name" value="Nucleoside diphosphate kinase-like domain"/>
    <property type="match status" value="1"/>
</dbReference>
<dbReference type="HAMAP" id="MF_00451">
    <property type="entry name" value="NDP_kinase"/>
    <property type="match status" value="1"/>
</dbReference>
<dbReference type="InterPro" id="IPR034907">
    <property type="entry name" value="NDK-like_dom"/>
</dbReference>
<dbReference type="InterPro" id="IPR036850">
    <property type="entry name" value="NDK-like_dom_sf"/>
</dbReference>
<dbReference type="InterPro" id="IPR001564">
    <property type="entry name" value="Nucleoside_diP_kinase"/>
</dbReference>
<dbReference type="NCBIfam" id="NF001908">
    <property type="entry name" value="PRK00668.1"/>
    <property type="match status" value="1"/>
</dbReference>
<dbReference type="PANTHER" id="PTHR46161">
    <property type="entry name" value="NUCLEOSIDE DIPHOSPHATE KINASE"/>
    <property type="match status" value="1"/>
</dbReference>
<dbReference type="PANTHER" id="PTHR46161:SF3">
    <property type="entry name" value="NUCLEOSIDE DIPHOSPHATE KINASE DDB_G0292928-RELATED"/>
    <property type="match status" value="1"/>
</dbReference>
<dbReference type="Pfam" id="PF00334">
    <property type="entry name" value="NDK"/>
    <property type="match status" value="1"/>
</dbReference>
<dbReference type="PRINTS" id="PR01243">
    <property type="entry name" value="NUCDPKINASE"/>
</dbReference>
<dbReference type="SMART" id="SM00562">
    <property type="entry name" value="NDK"/>
    <property type="match status" value="1"/>
</dbReference>
<dbReference type="SUPFAM" id="SSF54919">
    <property type="entry name" value="Nucleoside diphosphate kinase, NDK"/>
    <property type="match status" value="1"/>
</dbReference>
<dbReference type="PROSITE" id="PS51374">
    <property type="entry name" value="NDPK_LIKE"/>
    <property type="match status" value="1"/>
</dbReference>
<accession>Q1QLH8</accession>
<name>NDK_NITHX</name>
<reference key="1">
    <citation type="submission" date="2006-03" db="EMBL/GenBank/DDBJ databases">
        <title>Complete sequence of chromosome of Nitrobacter hamburgensis X14.</title>
        <authorList>
            <consortium name="US DOE Joint Genome Institute"/>
            <person name="Copeland A."/>
            <person name="Lucas S."/>
            <person name="Lapidus A."/>
            <person name="Barry K."/>
            <person name="Detter J.C."/>
            <person name="Glavina del Rio T."/>
            <person name="Hammon N."/>
            <person name="Israni S."/>
            <person name="Dalin E."/>
            <person name="Tice H."/>
            <person name="Pitluck S."/>
            <person name="Chain P."/>
            <person name="Malfatti S."/>
            <person name="Shin M."/>
            <person name="Vergez L."/>
            <person name="Schmutz J."/>
            <person name="Larimer F."/>
            <person name="Land M."/>
            <person name="Hauser L."/>
            <person name="Kyrpides N."/>
            <person name="Ivanova N."/>
            <person name="Ward B."/>
            <person name="Arp D."/>
            <person name="Klotz M."/>
            <person name="Stein L."/>
            <person name="O'Mullan G."/>
            <person name="Starkenburg S."/>
            <person name="Sayavedra L."/>
            <person name="Poret-Peterson A.T."/>
            <person name="Gentry M.E."/>
            <person name="Bruce D."/>
            <person name="Richardson P."/>
        </authorList>
    </citation>
    <scope>NUCLEOTIDE SEQUENCE [LARGE SCALE GENOMIC DNA]</scope>
    <source>
        <strain>DSM 10229 / NCIMB 13809 / X14</strain>
    </source>
</reference>
<gene>
    <name evidence="1" type="primary">ndk</name>
    <name type="ordered locus">Nham_2122</name>
</gene>
<evidence type="ECO:0000255" key="1">
    <source>
        <dbReference type="HAMAP-Rule" id="MF_00451"/>
    </source>
</evidence>
<sequence>MAIERTFSILKPDATARNLTGAINALIEKAGLRIVAQKRIRMTREQAETFYAVHKARPFFGELVDFMISGPVVVQVLEGENAVLKHREIMGATDPSKAADGTIRKLHATSVGENSVHGSDATETAAVEIAQFFSGNEIVG</sequence>
<organism>
    <name type="scientific">Nitrobacter hamburgensis (strain DSM 10229 / NCIMB 13809 / X14)</name>
    <dbReference type="NCBI Taxonomy" id="323097"/>
    <lineage>
        <taxon>Bacteria</taxon>
        <taxon>Pseudomonadati</taxon>
        <taxon>Pseudomonadota</taxon>
        <taxon>Alphaproteobacteria</taxon>
        <taxon>Hyphomicrobiales</taxon>
        <taxon>Nitrobacteraceae</taxon>
        <taxon>Nitrobacter</taxon>
    </lineage>
</organism>
<protein>
    <recommendedName>
        <fullName evidence="1">Nucleoside diphosphate kinase</fullName>
        <shortName evidence="1">NDK</shortName>
        <shortName evidence="1">NDP kinase</shortName>
        <ecNumber evidence="1">2.7.4.6</ecNumber>
    </recommendedName>
    <alternativeName>
        <fullName evidence="1">Nucleoside-2-P kinase</fullName>
    </alternativeName>
</protein>